<dbReference type="EMBL" id="AF068825">
    <property type="protein sequence ID" value="AAC19121.1"/>
    <property type="molecule type" value="Genomic_DNA"/>
</dbReference>
<dbReference type="SMR" id="O59649"/>
<dbReference type="GO" id="GO:0097589">
    <property type="term" value="C:archaeal-type flagellum"/>
    <property type="evidence" value="ECO:0007669"/>
    <property type="project" value="UniProtKB-SubCell"/>
</dbReference>
<dbReference type="GO" id="GO:0005886">
    <property type="term" value="C:plasma membrane"/>
    <property type="evidence" value="ECO:0007669"/>
    <property type="project" value="UniProtKB-SubCell"/>
</dbReference>
<dbReference type="InterPro" id="IPR056569">
    <property type="entry name" value="ArlJ-like"/>
</dbReference>
<dbReference type="InterPro" id="IPR018076">
    <property type="entry name" value="T2SS_GspF_dom"/>
</dbReference>
<dbReference type="NCBIfam" id="NF004704">
    <property type="entry name" value="PRK06041.1-2"/>
    <property type="match status" value="1"/>
</dbReference>
<dbReference type="PANTHER" id="PTHR35402:SF2">
    <property type="entry name" value="FLAGELLA ACCESSORY PROTEIN J"/>
    <property type="match status" value="1"/>
</dbReference>
<dbReference type="PANTHER" id="PTHR35402">
    <property type="entry name" value="INTEGRAL MEMBRANE PROTEIN-RELATED"/>
    <property type="match status" value="1"/>
</dbReference>
<dbReference type="Pfam" id="PF00482">
    <property type="entry name" value="T2SSF"/>
    <property type="match status" value="1"/>
</dbReference>
<proteinExistence type="predicted"/>
<protein>
    <recommendedName>
        <fullName>Flagella accessory protein J</fullName>
    </recommendedName>
</protein>
<name>FLAJ_METVO</name>
<keyword id="KW-0974">Archaeal flagellum</keyword>
<keyword id="KW-1003">Cell membrane</keyword>
<keyword id="KW-0472">Membrane</keyword>
<keyword id="KW-0812">Transmembrane</keyword>
<keyword id="KW-1133">Transmembrane helix</keyword>
<sequence length="558" mass="63017">MILDILPRVGLKPKDYFLKFVLPAVLASLFMVVLGFIYFDGITRLLVLALPLLLLGGALGYPYIELDSQKQKINERLHVYITKFGVLSITDLDNKALLELLSVEKEELGQLAEESRKIYVLVKRWNQSLAGSCRFLANRTPSSQFGDFLDRMAYSIDSGQELKEFLAGEQDIVMDEYAGFYERALYSLDNFKEMYVSAITSVSFFVTFAIIAPFLLPYDFVTMVTVAIFIFMIIEVILIYSIKNKLPYDRLWHTGEKPTAIDRKLRKWLIISVGLTILASIVLFWGKYIYEAPQLLKIPYELIFSIAMTPLMLGGYMAQREESLVIRKENNFPDFLRSLGDSVSAKGGGTLESLGYLCTNDFGPLTKDLVALHRRLSIRINGQKSWKYFGHDTCSYLIQLFSEMYERCTYLGGNSGQASHIIGKNFRKILRLRRSKYQNVNQFAGVMYGLSGGMALTLFASYGVASMVNGLYSSLDIPDTMLSMVHVVAPSDFGFISYMMYGTLIIYALCSSYLIKLMDGGHYQVSLLHFSTMVWISSIVAVVTEMVTNSLLKATIPV</sequence>
<reference key="1">
    <citation type="submission" date="1998-05" db="EMBL/GenBank/DDBJ databases">
        <authorList>
            <person name="Correia J.D."/>
            <person name="Jarrell K.F."/>
        </authorList>
    </citation>
    <scope>NUCLEOTIDE SEQUENCE [GENOMIC DNA]</scope>
</reference>
<feature type="chain" id="PRO_0000087281" description="Flagella accessory protein J">
    <location>
        <begin position="1"/>
        <end position="558"/>
    </location>
</feature>
<feature type="transmembrane region" description="Helical" evidence="1">
    <location>
        <begin position="17"/>
        <end position="37"/>
    </location>
</feature>
<feature type="transmembrane region" description="Helical" evidence="1">
    <location>
        <begin position="45"/>
        <end position="65"/>
    </location>
</feature>
<feature type="transmembrane region" description="Helical" evidence="1">
    <location>
        <begin position="196"/>
        <end position="216"/>
    </location>
</feature>
<feature type="transmembrane region" description="Helical" evidence="1">
    <location>
        <begin position="220"/>
        <end position="240"/>
    </location>
</feature>
<feature type="transmembrane region" description="Helical" evidence="1">
    <location>
        <begin position="269"/>
        <end position="289"/>
    </location>
</feature>
<feature type="transmembrane region" description="Helical" evidence="1">
    <location>
        <begin position="298"/>
        <end position="318"/>
    </location>
</feature>
<feature type="transmembrane region" description="Helical" evidence="1">
    <location>
        <begin position="443"/>
        <end position="463"/>
    </location>
</feature>
<feature type="transmembrane region" description="Helical" evidence="1">
    <location>
        <begin position="495"/>
        <end position="515"/>
    </location>
</feature>
<feature type="transmembrane region" description="Helical" evidence="1">
    <location>
        <begin position="527"/>
        <end position="547"/>
    </location>
</feature>
<organism>
    <name type="scientific">Methanococcus voltae</name>
    <dbReference type="NCBI Taxonomy" id="2188"/>
    <lineage>
        <taxon>Archaea</taxon>
        <taxon>Methanobacteriati</taxon>
        <taxon>Methanobacteriota</taxon>
        <taxon>Methanomada group</taxon>
        <taxon>Methanococci</taxon>
        <taxon>Methanococcales</taxon>
        <taxon>Methanococcaceae</taxon>
        <taxon>Methanococcus</taxon>
    </lineage>
</organism>
<comment type="subcellular location">
    <subcellularLocation>
        <location evidence="2">Cell membrane</location>
        <topology evidence="2">Multi-pass membrane protein</topology>
    </subcellularLocation>
    <subcellularLocation>
        <location evidence="2">Archaeal flagellum</location>
    </subcellularLocation>
</comment>
<comment type="similarity">
    <text evidence="2">To M.jannaschii FlaJ.</text>
</comment>
<accession>O59649</accession>
<evidence type="ECO:0000255" key="1"/>
<evidence type="ECO:0000305" key="2"/>
<gene>
    <name type="primary">flaJ</name>
</gene>